<accession>Q5FTZ7</accession>
<keyword id="KW-1185">Reference proteome</keyword>
<keyword id="KW-0687">Ribonucleoprotein</keyword>
<keyword id="KW-0689">Ribosomal protein</keyword>
<keyword id="KW-0694">RNA-binding</keyword>
<keyword id="KW-0699">rRNA-binding</keyword>
<protein>
    <recommendedName>
        <fullName evidence="1">Small ribosomal subunit protein uS8</fullName>
    </recommendedName>
    <alternativeName>
        <fullName evidence="2">30S ribosomal protein S8</fullName>
    </alternativeName>
</protein>
<comment type="function">
    <text evidence="1">One of the primary rRNA binding proteins, it binds directly to 16S rRNA central domain where it helps coordinate assembly of the platform of the 30S subunit.</text>
</comment>
<comment type="subunit">
    <text evidence="1">Part of the 30S ribosomal subunit. Contacts proteins S5 and S12.</text>
</comment>
<comment type="similarity">
    <text evidence="1">Belongs to the universal ribosomal protein uS8 family.</text>
</comment>
<sequence>MSLSDPLGDMLTRIRNAQRARHAVCVAPASKLRASVLEALKREGYIRGFAAEELRKGVAQLRIELKYVEGQPVIKEIHRVSKPGRRVYSKIKELPRVYAGLGVSILSTPRGVLSDVEARAANVGGEVLCRVF</sequence>
<name>RS8_GLUOX</name>
<reference key="1">
    <citation type="journal article" date="2005" name="Nat. Biotechnol.">
        <title>Complete genome sequence of the acetic acid bacterium Gluconobacter oxydans.</title>
        <authorList>
            <person name="Prust C."/>
            <person name="Hoffmeister M."/>
            <person name="Liesegang H."/>
            <person name="Wiezer A."/>
            <person name="Fricke W.F."/>
            <person name="Ehrenreich A."/>
            <person name="Gottschalk G."/>
            <person name="Deppenmeier U."/>
        </authorList>
    </citation>
    <scope>NUCLEOTIDE SEQUENCE [LARGE SCALE GENOMIC DNA]</scope>
    <source>
        <strain>621H</strain>
    </source>
</reference>
<feature type="chain" id="PRO_0000126415" description="Small ribosomal subunit protein uS8">
    <location>
        <begin position="1"/>
        <end position="132"/>
    </location>
</feature>
<proteinExistence type="inferred from homology"/>
<evidence type="ECO:0000255" key="1">
    <source>
        <dbReference type="HAMAP-Rule" id="MF_01302"/>
    </source>
</evidence>
<evidence type="ECO:0000305" key="2"/>
<gene>
    <name evidence="1" type="primary">rpsH</name>
    <name type="ordered locus">GOX0366</name>
</gene>
<dbReference type="EMBL" id="CP000009">
    <property type="protein sequence ID" value="AAW60149.1"/>
    <property type="molecule type" value="Genomic_DNA"/>
</dbReference>
<dbReference type="RefSeq" id="WP_011251952.1">
    <property type="nucleotide sequence ID" value="NZ_LT900338.1"/>
</dbReference>
<dbReference type="SMR" id="Q5FTZ7"/>
<dbReference type="STRING" id="290633.GOX0366"/>
<dbReference type="GeneID" id="76195068"/>
<dbReference type="KEGG" id="gox:GOX0366"/>
<dbReference type="eggNOG" id="COG0096">
    <property type="taxonomic scope" value="Bacteria"/>
</dbReference>
<dbReference type="HOGENOM" id="CLU_098428_0_0_5"/>
<dbReference type="Proteomes" id="UP000006375">
    <property type="component" value="Chromosome"/>
</dbReference>
<dbReference type="GO" id="GO:1990904">
    <property type="term" value="C:ribonucleoprotein complex"/>
    <property type="evidence" value="ECO:0007669"/>
    <property type="project" value="UniProtKB-KW"/>
</dbReference>
<dbReference type="GO" id="GO:0005840">
    <property type="term" value="C:ribosome"/>
    <property type="evidence" value="ECO:0007669"/>
    <property type="project" value="UniProtKB-KW"/>
</dbReference>
<dbReference type="GO" id="GO:0019843">
    <property type="term" value="F:rRNA binding"/>
    <property type="evidence" value="ECO:0007669"/>
    <property type="project" value="UniProtKB-UniRule"/>
</dbReference>
<dbReference type="GO" id="GO:0003735">
    <property type="term" value="F:structural constituent of ribosome"/>
    <property type="evidence" value="ECO:0007669"/>
    <property type="project" value="InterPro"/>
</dbReference>
<dbReference type="GO" id="GO:0006412">
    <property type="term" value="P:translation"/>
    <property type="evidence" value="ECO:0007669"/>
    <property type="project" value="UniProtKB-UniRule"/>
</dbReference>
<dbReference type="FunFam" id="3.30.1370.30:FF:000002">
    <property type="entry name" value="30S ribosomal protein S8"/>
    <property type="match status" value="1"/>
</dbReference>
<dbReference type="FunFam" id="3.30.1490.10:FF:000001">
    <property type="entry name" value="30S ribosomal protein S8"/>
    <property type="match status" value="1"/>
</dbReference>
<dbReference type="Gene3D" id="3.30.1370.30">
    <property type="match status" value="1"/>
</dbReference>
<dbReference type="Gene3D" id="3.30.1490.10">
    <property type="match status" value="1"/>
</dbReference>
<dbReference type="HAMAP" id="MF_01302_B">
    <property type="entry name" value="Ribosomal_uS8_B"/>
    <property type="match status" value="1"/>
</dbReference>
<dbReference type="InterPro" id="IPR000630">
    <property type="entry name" value="Ribosomal_uS8"/>
</dbReference>
<dbReference type="InterPro" id="IPR047863">
    <property type="entry name" value="Ribosomal_uS8_CS"/>
</dbReference>
<dbReference type="InterPro" id="IPR035987">
    <property type="entry name" value="Ribosomal_uS8_sf"/>
</dbReference>
<dbReference type="NCBIfam" id="NF001109">
    <property type="entry name" value="PRK00136.1"/>
    <property type="match status" value="1"/>
</dbReference>
<dbReference type="PANTHER" id="PTHR11758">
    <property type="entry name" value="40S RIBOSOMAL PROTEIN S15A"/>
    <property type="match status" value="1"/>
</dbReference>
<dbReference type="Pfam" id="PF00410">
    <property type="entry name" value="Ribosomal_S8"/>
    <property type="match status" value="1"/>
</dbReference>
<dbReference type="SUPFAM" id="SSF56047">
    <property type="entry name" value="Ribosomal protein S8"/>
    <property type="match status" value="1"/>
</dbReference>
<dbReference type="PROSITE" id="PS00053">
    <property type="entry name" value="RIBOSOMAL_S8"/>
    <property type="match status" value="1"/>
</dbReference>
<organism>
    <name type="scientific">Gluconobacter oxydans (strain 621H)</name>
    <name type="common">Gluconobacter suboxydans</name>
    <dbReference type="NCBI Taxonomy" id="290633"/>
    <lineage>
        <taxon>Bacteria</taxon>
        <taxon>Pseudomonadati</taxon>
        <taxon>Pseudomonadota</taxon>
        <taxon>Alphaproteobacteria</taxon>
        <taxon>Acetobacterales</taxon>
        <taxon>Acetobacteraceae</taxon>
        <taxon>Gluconobacter</taxon>
    </lineage>
</organism>